<comment type="function">
    <text evidence="1">Catalyzes the rearrangement of 1-deoxy-D-xylulose 5-phosphate (DXP) to produce the thiazole phosphate moiety of thiamine. Sulfur is provided by the thiocarboxylate moiety of the carrier protein ThiS. In vitro, sulfur can be provided by H(2)S.</text>
</comment>
<comment type="catalytic activity">
    <reaction evidence="1">
        <text>[ThiS sulfur-carrier protein]-C-terminal-Gly-aminoethanethioate + 2-iminoacetate + 1-deoxy-D-xylulose 5-phosphate = [ThiS sulfur-carrier protein]-C-terminal Gly-Gly + 2-[(2R,5Z)-2-carboxy-4-methylthiazol-5(2H)-ylidene]ethyl phosphate + 2 H2O + H(+)</text>
        <dbReference type="Rhea" id="RHEA:26297"/>
        <dbReference type="Rhea" id="RHEA-COMP:12909"/>
        <dbReference type="Rhea" id="RHEA-COMP:19908"/>
        <dbReference type="ChEBI" id="CHEBI:15377"/>
        <dbReference type="ChEBI" id="CHEBI:15378"/>
        <dbReference type="ChEBI" id="CHEBI:57792"/>
        <dbReference type="ChEBI" id="CHEBI:62899"/>
        <dbReference type="ChEBI" id="CHEBI:77846"/>
        <dbReference type="ChEBI" id="CHEBI:90778"/>
        <dbReference type="ChEBI" id="CHEBI:232372"/>
        <dbReference type="EC" id="2.8.1.10"/>
    </reaction>
</comment>
<comment type="pathway">
    <text evidence="1">Cofactor biosynthesis; thiamine diphosphate biosynthesis.</text>
</comment>
<comment type="subunit">
    <text evidence="1">Homotetramer. Forms heterodimers with either ThiH or ThiS.</text>
</comment>
<comment type="subcellular location">
    <subcellularLocation>
        <location evidence="1">Cytoplasm</location>
    </subcellularLocation>
</comment>
<comment type="similarity">
    <text evidence="1">Belongs to the ThiG family.</text>
</comment>
<name>THIG_VIBVU</name>
<dbReference type="EC" id="2.8.1.10" evidence="1"/>
<dbReference type="EMBL" id="AE016795">
    <property type="protein sequence ID" value="AAO09454.1"/>
    <property type="molecule type" value="Genomic_DNA"/>
</dbReference>
<dbReference type="RefSeq" id="WP_011079006.1">
    <property type="nucleotide sequence ID" value="NC_004459.3"/>
</dbReference>
<dbReference type="SMR" id="Q8DDL8"/>
<dbReference type="KEGG" id="vvu:VV1_0960"/>
<dbReference type="HOGENOM" id="CLU_062233_1_0_6"/>
<dbReference type="UniPathway" id="UPA00060"/>
<dbReference type="Proteomes" id="UP000002275">
    <property type="component" value="Chromosome 1"/>
</dbReference>
<dbReference type="GO" id="GO:0005737">
    <property type="term" value="C:cytoplasm"/>
    <property type="evidence" value="ECO:0007669"/>
    <property type="project" value="UniProtKB-SubCell"/>
</dbReference>
<dbReference type="GO" id="GO:1990107">
    <property type="term" value="F:thiazole synthase activity"/>
    <property type="evidence" value="ECO:0007669"/>
    <property type="project" value="UniProtKB-EC"/>
</dbReference>
<dbReference type="GO" id="GO:0009229">
    <property type="term" value="P:thiamine diphosphate biosynthetic process"/>
    <property type="evidence" value="ECO:0007669"/>
    <property type="project" value="UniProtKB-UniRule"/>
</dbReference>
<dbReference type="CDD" id="cd04728">
    <property type="entry name" value="ThiG"/>
    <property type="match status" value="1"/>
</dbReference>
<dbReference type="FunFam" id="3.20.20.70:FF:000049">
    <property type="entry name" value="Thiazole synthase"/>
    <property type="match status" value="1"/>
</dbReference>
<dbReference type="Gene3D" id="3.20.20.70">
    <property type="entry name" value="Aldolase class I"/>
    <property type="match status" value="1"/>
</dbReference>
<dbReference type="HAMAP" id="MF_00443">
    <property type="entry name" value="ThiG"/>
    <property type="match status" value="1"/>
</dbReference>
<dbReference type="InterPro" id="IPR013785">
    <property type="entry name" value="Aldolase_TIM"/>
</dbReference>
<dbReference type="InterPro" id="IPR033983">
    <property type="entry name" value="Thiazole_synthase_ThiG"/>
</dbReference>
<dbReference type="InterPro" id="IPR008867">
    <property type="entry name" value="ThiG"/>
</dbReference>
<dbReference type="PANTHER" id="PTHR34266">
    <property type="entry name" value="THIAZOLE SYNTHASE"/>
    <property type="match status" value="1"/>
</dbReference>
<dbReference type="PANTHER" id="PTHR34266:SF2">
    <property type="entry name" value="THIAZOLE SYNTHASE"/>
    <property type="match status" value="1"/>
</dbReference>
<dbReference type="Pfam" id="PF05690">
    <property type="entry name" value="ThiG"/>
    <property type="match status" value="1"/>
</dbReference>
<dbReference type="SUPFAM" id="SSF110399">
    <property type="entry name" value="ThiG-like"/>
    <property type="match status" value="1"/>
</dbReference>
<sequence>MLKIADKQFHSRLFTGTGKFANSQLMSQAIEQSGSQLATMALKRVDIHNQQDDILSPLLSAGVNLLPNTSGAKNAKDAIFAAHLAREALGTNWLKLEIHPDPKYLMPDPIETLAAAEQLVKDGFVVLPYCHADPVLCKRLEEVGCAAVMPLGAPIGSNKGLVSQDFLQIIIDQAKVPVVVDAGIGAPSHAAYAMELGADAVLVNTAIAAARDPIAMARAFKLAVEAGRLAYESGLAGKVSHAVASSPLTSFLDECLS</sequence>
<protein>
    <recommendedName>
        <fullName evidence="1">Thiazole synthase</fullName>
        <ecNumber evidence="1">2.8.1.10</ecNumber>
    </recommendedName>
</protein>
<proteinExistence type="inferred from homology"/>
<organism>
    <name type="scientific">Vibrio vulnificus (strain CMCP6)</name>
    <dbReference type="NCBI Taxonomy" id="216895"/>
    <lineage>
        <taxon>Bacteria</taxon>
        <taxon>Pseudomonadati</taxon>
        <taxon>Pseudomonadota</taxon>
        <taxon>Gammaproteobacteria</taxon>
        <taxon>Vibrionales</taxon>
        <taxon>Vibrionaceae</taxon>
        <taxon>Vibrio</taxon>
    </lineage>
</organism>
<keyword id="KW-0963">Cytoplasm</keyword>
<keyword id="KW-0704">Schiff base</keyword>
<keyword id="KW-0784">Thiamine biosynthesis</keyword>
<keyword id="KW-0808">Transferase</keyword>
<reference key="1">
    <citation type="submission" date="2002-12" db="EMBL/GenBank/DDBJ databases">
        <title>Complete genome sequence of Vibrio vulnificus CMCP6.</title>
        <authorList>
            <person name="Rhee J.H."/>
            <person name="Kim S.Y."/>
            <person name="Chung S.S."/>
            <person name="Kim J.J."/>
            <person name="Moon Y.H."/>
            <person name="Jeong H."/>
            <person name="Choy H.E."/>
        </authorList>
    </citation>
    <scope>NUCLEOTIDE SEQUENCE [LARGE SCALE GENOMIC DNA]</scope>
    <source>
        <strain>CMCP6</strain>
    </source>
</reference>
<feature type="chain" id="PRO_0000162873" description="Thiazole synthase">
    <location>
        <begin position="1"/>
        <end position="257"/>
    </location>
</feature>
<feature type="active site" description="Schiff-base intermediate with DXP" evidence="1">
    <location>
        <position position="95"/>
    </location>
</feature>
<feature type="binding site" evidence="1">
    <location>
        <position position="156"/>
    </location>
    <ligand>
        <name>1-deoxy-D-xylulose 5-phosphate</name>
        <dbReference type="ChEBI" id="CHEBI:57792"/>
    </ligand>
</feature>
<feature type="binding site" evidence="1">
    <location>
        <begin position="182"/>
        <end position="183"/>
    </location>
    <ligand>
        <name>1-deoxy-D-xylulose 5-phosphate</name>
        <dbReference type="ChEBI" id="CHEBI:57792"/>
    </ligand>
</feature>
<feature type="binding site" evidence="1">
    <location>
        <begin position="204"/>
        <end position="205"/>
    </location>
    <ligand>
        <name>1-deoxy-D-xylulose 5-phosphate</name>
        <dbReference type="ChEBI" id="CHEBI:57792"/>
    </ligand>
</feature>
<accession>Q8DDL8</accession>
<evidence type="ECO:0000255" key="1">
    <source>
        <dbReference type="HAMAP-Rule" id="MF_00443"/>
    </source>
</evidence>
<gene>
    <name evidence="1" type="primary">thiG</name>
    <name type="ordered locus">VV1_0960</name>
</gene>